<protein>
    <recommendedName>
        <fullName>Forkhead box protein D3-A</fullName>
        <shortName>FoxD3-A</shortName>
        <shortName>FoxD3a</shortName>
    </recommendedName>
    <alternativeName>
        <fullName>Fork head domain-related protein 6</fullName>
        <shortName>FKH-6</shortName>
        <shortName>Forkhead protein 6</shortName>
        <shortName>xFD-6</shortName>
        <shortName>xFKH6</shortName>
    </alternativeName>
</protein>
<feature type="chain" id="PRO_0000250608" description="Forkhead box protein D3-A">
    <location>
        <begin position="1"/>
        <end position="371"/>
    </location>
</feature>
<feature type="DNA-binding region" description="Fork-head" evidence="1">
    <location>
        <begin position="94"/>
        <end position="188"/>
    </location>
</feature>
<feature type="region of interest" description="Disordered" evidence="2">
    <location>
        <begin position="1"/>
        <end position="90"/>
    </location>
</feature>
<feature type="region of interest" description="tle4-binding">
    <location>
        <begin position="297"/>
        <end position="303"/>
    </location>
</feature>
<feature type="compositionally biased region" description="Polar residues" evidence="2">
    <location>
        <begin position="1"/>
        <end position="18"/>
    </location>
</feature>
<feature type="compositionally biased region" description="Acidic residues" evidence="2">
    <location>
        <begin position="21"/>
        <end position="33"/>
    </location>
</feature>
<feature type="compositionally biased region" description="Basic and acidic residues" evidence="2">
    <location>
        <begin position="47"/>
        <end position="60"/>
    </location>
</feature>
<feature type="compositionally biased region" description="Low complexity" evidence="2">
    <location>
        <begin position="75"/>
        <end position="85"/>
    </location>
</feature>
<feature type="mutagenesis site" description="Reduces mesoderm-inducing activity; when associated with A-144." evidence="5">
    <original>N</original>
    <variation>A</variation>
    <location>
        <position position="140"/>
    </location>
</feature>
<feature type="mutagenesis site" description="Reduces mesoderm-inducing activity; when associated with A-140." evidence="5">
    <original>H</original>
    <variation>A</variation>
    <location>
        <position position="144"/>
    </location>
</feature>
<feature type="mutagenesis site" description="Abolishes DNA-binding and disrupts function." evidence="3">
    <original>L</original>
    <variation>F</variation>
    <location>
        <position position="146"/>
    </location>
</feature>
<feature type="mutagenesis site" description="Abolishes mesoderm inducing activity and interaction with tle4." evidence="5">
    <original>FSIENI</original>
    <variation>AAAAAA</variation>
    <location>
        <begin position="297"/>
        <end position="302"/>
    </location>
</feature>
<feature type="mutagenesis site" description="Abolishes mesoderm inducing activity and interaction with tle4." evidence="5">
    <original>F</original>
    <variation>E</variation>
    <location>
        <position position="297"/>
    </location>
</feature>
<accession>Q9DEN4</accession>
<accession>Q9PS83</accession>
<dbReference type="EMBL" id="AB014611">
    <property type="protein sequence ID" value="BAA36334.1"/>
    <property type="molecule type" value="mRNA"/>
</dbReference>
<dbReference type="EMBL" id="AJ298865">
    <property type="protein sequence ID" value="CAC12963.1"/>
    <property type="molecule type" value="Genomic_DNA"/>
</dbReference>
<dbReference type="EMBL" id="BC123272">
    <property type="protein sequence ID" value="AAI23273.1"/>
    <property type="molecule type" value="mRNA"/>
</dbReference>
<dbReference type="PIR" id="G56556">
    <property type="entry name" value="G56556"/>
</dbReference>
<dbReference type="RefSeq" id="NP_001079026.1">
    <property type="nucleotide sequence ID" value="NM_001085557.1"/>
</dbReference>
<dbReference type="SMR" id="Q9DEN4"/>
<dbReference type="GeneID" id="373548"/>
<dbReference type="KEGG" id="xla:373548"/>
<dbReference type="AGR" id="Xenbase:XB-GENE-865691"/>
<dbReference type="CTD" id="373548"/>
<dbReference type="Xenbase" id="XB-GENE-865691">
    <property type="gene designation" value="foxd3.L"/>
</dbReference>
<dbReference type="OrthoDB" id="5402974at2759"/>
<dbReference type="Proteomes" id="UP000186698">
    <property type="component" value="Chromosome 4L"/>
</dbReference>
<dbReference type="Bgee" id="373548">
    <property type="expression patterns" value="Expressed in neurula embryo and 13 other cell types or tissues"/>
</dbReference>
<dbReference type="GO" id="GO:0005634">
    <property type="term" value="C:nucleus"/>
    <property type="evidence" value="ECO:0000314"/>
    <property type="project" value="UniProtKB"/>
</dbReference>
<dbReference type="GO" id="GO:0003677">
    <property type="term" value="F:DNA binding"/>
    <property type="evidence" value="ECO:0000314"/>
    <property type="project" value="UniProtKB"/>
</dbReference>
<dbReference type="GO" id="GO:0000981">
    <property type="term" value="F:DNA-binding transcription factor activity, RNA polymerase II-specific"/>
    <property type="evidence" value="ECO:0000318"/>
    <property type="project" value="GO_Central"/>
</dbReference>
<dbReference type="GO" id="GO:0000978">
    <property type="term" value="F:RNA polymerase II cis-regulatory region sequence-specific DNA binding"/>
    <property type="evidence" value="ECO:0000318"/>
    <property type="project" value="GO_Central"/>
</dbReference>
<dbReference type="GO" id="GO:0009653">
    <property type="term" value="P:anatomical structure morphogenesis"/>
    <property type="evidence" value="ECO:0000318"/>
    <property type="project" value="GO_Central"/>
</dbReference>
<dbReference type="GO" id="GO:0030154">
    <property type="term" value="P:cell differentiation"/>
    <property type="evidence" value="ECO:0000318"/>
    <property type="project" value="GO_Central"/>
</dbReference>
<dbReference type="GO" id="GO:0001707">
    <property type="term" value="P:mesoderm formation"/>
    <property type="evidence" value="ECO:0000315"/>
    <property type="project" value="UniProtKB"/>
</dbReference>
<dbReference type="GO" id="GO:0045892">
    <property type="term" value="P:negative regulation of DNA-templated transcription"/>
    <property type="evidence" value="ECO:0000314"/>
    <property type="project" value="UniProtKB"/>
</dbReference>
<dbReference type="GO" id="GO:0050768">
    <property type="term" value="P:negative regulation of neurogenesis"/>
    <property type="evidence" value="ECO:0000315"/>
    <property type="project" value="UniProtKB"/>
</dbReference>
<dbReference type="GO" id="GO:0007399">
    <property type="term" value="P:nervous system development"/>
    <property type="evidence" value="ECO:0007669"/>
    <property type="project" value="UniProtKB-KW"/>
</dbReference>
<dbReference type="GO" id="GO:0014034">
    <property type="term" value="P:neural crest cell fate commitment"/>
    <property type="evidence" value="ECO:0000315"/>
    <property type="project" value="UniProtKB"/>
</dbReference>
<dbReference type="GO" id="GO:0050769">
    <property type="term" value="P:positive regulation of neurogenesis"/>
    <property type="evidence" value="ECO:0000315"/>
    <property type="project" value="UniProtKB"/>
</dbReference>
<dbReference type="GO" id="GO:0006357">
    <property type="term" value="P:regulation of transcription by RNA polymerase II"/>
    <property type="evidence" value="ECO:0000318"/>
    <property type="project" value="GO_Central"/>
</dbReference>
<dbReference type="CDD" id="cd20047">
    <property type="entry name" value="FH_FOXD3"/>
    <property type="match status" value="1"/>
</dbReference>
<dbReference type="FunFam" id="1.10.10.10:FF:000016">
    <property type="entry name" value="Forkhead box protein I1"/>
    <property type="match status" value="1"/>
</dbReference>
<dbReference type="Gene3D" id="1.10.10.10">
    <property type="entry name" value="Winged helix-like DNA-binding domain superfamily/Winged helix DNA-binding domain"/>
    <property type="match status" value="1"/>
</dbReference>
<dbReference type="InterPro" id="IPR047392">
    <property type="entry name" value="FH_FOXD3"/>
</dbReference>
<dbReference type="InterPro" id="IPR001766">
    <property type="entry name" value="Fork_head_dom"/>
</dbReference>
<dbReference type="InterPro" id="IPR050211">
    <property type="entry name" value="FOX_domain-containing"/>
</dbReference>
<dbReference type="InterPro" id="IPR030456">
    <property type="entry name" value="TF_fork_head_CS_2"/>
</dbReference>
<dbReference type="InterPro" id="IPR036388">
    <property type="entry name" value="WH-like_DNA-bd_sf"/>
</dbReference>
<dbReference type="InterPro" id="IPR036390">
    <property type="entry name" value="WH_DNA-bd_sf"/>
</dbReference>
<dbReference type="PANTHER" id="PTHR11829">
    <property type="entry name" value="FORKHEAD BOX PROTEIN"/>
    <property type="match status" value="1"/>
</dbReference>
<dbReference type="PANTHER" id="PTHR11829:SF361">
    <property type="entry name" value="FORKHEAD BOX PROTEIN D4-LIKE 1"/>
    <property type="match status" value="1"/>
</dbReference>
<dbReference type="Pfam" id="PF00250">
    <property type="entry name" value="Forkhead"/>
    <property type="match status" value="1"/>
</dbReference>
<dbReference type="PRINTS" id="PR00053">
    <property type="entry name" value="FORKHEAD"/>
</dbReference>
<dbReference type="SMART" id="SM00339">
    <property type="entry name" value="FH"/>
    <property type="match status" value="1"/>
</dbReference>
<dbReference type="SUPFAM" id="SSF46785">
    <property type="entry name" value="Winged helix' DNA-binding domain"/>
    <property type="match status" value="1"/>
</dbReference>
<dbReference type="PROSITE" id="PS00658">
    <property type="entry name" value="FORK_HEAD_2"/>
    <property type="match status" value="1"/>
</dbReference>
<dbReference type="PROSITE" id="PS50039">
    <property type="entry name" value="FORK_HEAD_3"/>
    <property type="match status" value="1"/>
</dbReference>
<comment type="function">
    <text evidence="3 4 5">Transcriptional repressor that is an essential upstream regulator of neural crest determination and mesoderm induction. Functions by recruiting the transcriptional corepressor tle4. Also acts in a negative auto-regulator loop by inhibiting the transcription of its own gene.</text>
</comment>
<comment type="subunit">
    <text evidence="5">Interacts with tle4.</text>
</comment>
<comment type="subcellular location">
    <subcellularLocation>
        <location evidence="1 5">Nucleus</location>
    </subcellularLocation>
</comment>
<comment type="tissue specificity">
    <text evidence="3 4 6 7 8">Initially located within the dorsal blastopore lip (Spemann organizer) at the mid-gastrula stage. As expression fades in the neuroectoderm, expression begins in the head mesoderm in two regions at the lateral borders of the presumptive neural plate. These regions correspond to neural crest cells originating from the mesencephalon (anterior) and the rhombencephalon (posterior; rhombomeres 2, 4 and 6). Subsequently expressed within trunk premigratory neural crest cells. Expression disappears when neural crest cells begin to differentiate and migrate, except for those which populate the hyoid arch.</text>
</comment>
<comment type="developmental stage">
    <text evidence="3 4 7 8">Expressed both maternally and zygotically. Maternal expression decreases until the late blastula/early gastrula stage when zygotic expression begins. Expression is highest in the gastrula stage, after which it shows a gradual decrease, being clearly present until the tadpole stage.</text>
</comment>
<comment type="induction">
    <text evidence="3">By dorsal wnt signaling. Inhibited by bmp signaling.</text>
</comment>
<comment type="domain">
    <text>The C-terminus is required for transcriptional repression and mesoderm induction.</text>
</comment>
<name>FXD3A_XENLA</name>
<proteinExistence type="evidence at protein level"/>
<keyword id="KW-0217">Developmental protein</keyword>
<keyword id="KW-0221">Differentiation</keyword>
<keyword id="KW-0238">DNA-binding</keyword>
<keyword id="KW-0524">Neurogenesis</keyword>
<keyword id="KW-0539">Nucleus</keyword>
<keyword id="KW-1185">Reference proteome</keyword>
<keyword id="KW-0678">Repressor</keyword>
<keyword id="KW-0804">Transcription</keyword>
<keyword id="KW-0805">Transcription regulation</keyword>
<gene>
    <name type="primary">foxd3-a</name>
    <name type="synonym">fkh6</name>
    <name evidence="11" type="synonym">foxd3a</name>
</gene>
<evidence type="ECO:0000255" key="1">
    <source>
        <dbReference type="PROSITE-ProRule" id="PRU00089"/>
    </source>
</evidence>
<evidence type="ECO:0000256" key="2">
    <source>
        <dbReference type="SAM" id="MobiDB-lite"/>
    </source>
</evidence>
<evidence type="ECO:0000269" key="3">
    <source>
    </source>
</evidence>
<evidence type="ECO:0000269" key="4">
    <source>
    </source>
</evidence>
<evidence type="ECO:0000269" key="5">
    <source>
    </source>
</evidence>
<evidence type="ECO:0000269" key="6">
    <source>
    </source>
</evidence>
<evidence type="ECO:0000269" key="7">
    <source>
    </source>
</evidence>
<evidence type="ECO:0000269" key="8">
    <source ref="4"/>
</evidence>
<evidence type="ECO:0000305" key="9"/>
<evidence type="ECO:0000312" key="10">
    <source>
        <dbReference type="EMBL" id="BAA36334.1"/>
    </source>
</evidence>
<evidence type="ECO:0000312" key="11">
    <source>
        <dbReference type="EMBL" id="CAC12963.1"/>
    </source>
</evidence>
<reference evidence="9 10" key="1">
    <citation type="journal article" date="2001" name="Development">
        <title>Requirement of FoxD3-class signaling for neural crest determination in Xenopus.</title>
        <authorList>
            <person name="Sasai N."/>
            <person name="Mizuseki K."/>
            <person name="Sasai Y."/>
        </authorList>
    </citation>
    <scope>NUCLEOTIDE SEQUENCE [MRNA]</scope>
    <scope>FUNCTION</scope>
    <scope>TISSUE SPECIFICITY</scope>
    <scope>DEVELOPMENTAL STAGE</scope>
    <source>
        <tissue evidence="10">Neural crest</tissue>
    </source>
</reference>
<reference evidence="9 11" key="2">
    <citation type="journal article" date="2001" name="Mech. Dev.">
        <title>Overexpression of the transcriptional repressor FoxD3 prevents neural crest formation in Xenopus embryos.</title>
        <authorList>
            <person name="Pohl B.S."/>
            <person name="Knoechel W."/>
        </authorList>
    </citation>
    <scope>NUCLEOTIDE SEQUENCE [GENOMIC DNA / MRNA]</scope>
    <scope>FUNCTION</scope>
    <scope>TISSUE SPECIFICITY</scope>
    <scope>DEVELOPMENTAL STAGE</scope>
    <scope>INDUCTION</scope>
    <scope>MUTAGENESIS OF LEU-146</scope>
    <source>
        <tissue evidence="3">Gastrula</tissue>
    </source>
</reference>
<reference key="3">
    <citation type="submission" date="2006-09" db="EMBL/GenBank/DDBJ databases">
        <authorList>
            <consortium name="NIH - Xenopus Gene Collection (XGC) project"/>
        </authorList>
    </citation>
    <scope>NUCLEOTIDE SEQUENCE [LARGE SCALE MRNA]</scope>
    <source>
        <tissue>Embryo</tissue>
    </source>
</reference>
<reference evidence="9" key="4">
    <citation type="journal article" date="1995" name="Roux's Arch. Dev. Biol.">
        <title>Transcription patterns of four different fork head/HNF-3 related genes (XFD-4, 6, 9 and 10) in Xenopus laevis embryos.</title>
        <authorList>
            <person name="Scheucher M."/>
            <person name="Dege P."/>
            <person name="Lef J."/>
            <person name="Hille S."/>
            <person name="Knoechel W."/>
        </authorList>
    </citation>
    <scope>NUCLEOTIDE SEQUENCE [GENOMIC DNA] OF 41-238</scope>
    <scope>TISSUE SPECIFICITY</scope>
    <scope>DEVELOPMENTAL STAGE</scope>
</reference>
<reference evidence="9" key="5">
    <citation type="journal article" date="1992" name="Mech. Dev.">
        <title>Activin A induced expression of a fork head related gene in posterior chordamesoderm (notochord) of Xenopus laevis embryos.</title>
        <authorList>
            <person name="Knoechel S."/>
            <person name="Lef J."/>
            <person name="Clement J.H."/>
            <person name="Klocke B."/>
            <person name="Hille S."/>
            <person name="Koester M."/>
            <person name="Knoechel W."/>
        </authorList>
    </citation>
    <scope>NUCLEOTIDE SEQUENCE [GENOMIC DNA] OF 85-195</scope>
</reference>
<reference evidence="9" key="6">
    <citation type="journal article" date="1995" name="Dev. Genet.">
        <title>Differential expression of fork head genes during early Xenopus and zebrafish development.</title>
        <authorList>
            <person name="Dirksen M.-L."/>
            <person name="Jamrich M."/>
        </authorList>
    </citation>
    <scope>NUCLEOTIDE SEQUENCE [MRNA] OF 94-155</scope>
    <scope>TISSUE SPECIFICITY</scope>
    <source>
        <tissue evidence="6">Embryo</tissue>
    </source>
</reference>
<reference evidence="9" key="7">
    <citation type="journal article" date="1996" name="Int. J. Dev. Biol.">
        <title>A fork head related multigene family is transcribed in Xenopus laevis embryos.</title>
        <authorList>
            <person name="Lef J."/>
            <person name="Dege P."/>
            <person name="Scheucher M."/>
            <person name="Forsbach-Birk V."/>
            <person name="Clement J.H."/>
            <person name="Knoechel W."/>
        </authorList>
    </citation>
    <scope>TISSUE SPECIFICITY</scope>
    <scope>DEVELOPMENTAL STAGE</scope>
</reference>
<reference evidence="9" key="8">
    <citation type="journal article" date="2005" name="Gene">
        <title>Of fox and frogs: fox (fork head/winged helix) transcription factors in Xenopus development.</title>
        <authorList>
            <person name="Pohl B.S."/>
            <person name="Knoechel W."/>
        </authorList>
    </citation>
    <scope>REVIEW</scope>
</reference>
<reference key="9">
    <citation type="journal article" date="2007" name="J. Biol. Chem.">
        <title>FoxD3 and Grg4 physically interact to repress transcription and induce mesoderm in Xenopus.</title>
        <authorList>
            <person name="Yaklichkin S."/>
            <person name="Steiner A.B."/>
            <person name="Lu Q."/>
            <person name="Kessler D.S."/>
        </authorList>
    </citation>
    <scope>FUNCTION</scope>
    <scope>SUBCELLULAR LOCATION</scope>
    <scope>INTERACTION WITH TLE4</scope>
    <scope>MUTAGENESIS OF ASN-140; HIS-144; PHE-297 AND 297-PHE--ILE-302</scope>
</reference>
<organism>
    <name type="scientific">Xenopus laevis</name>
    <name type="common">African clawed frog</name>
    <dbReference type="NCBI Taxonomy" id="8355"/>
    <lineage>
        <taxon>Eukaryota</taxon>
        <taxon>Metazoa</taxon>
        <taxon>Chordata</taxon>
        <taxon>Craniata</taxon>
        <taxon>Vertebrata</taxon>
        <taxon>Euteleostomi</taxon>
        <taxon>Amphibia</taxon>
        <taxon>Batrachia</taxon>
        <taxon>Anura</taxon>
        <taxon>Pipoidea</taxon>
        <taxon>Pipidae</taxon>
        <taxon>Xenopodinae</taxon>
        <taxon>Xenopus</taxon>
        <taxon>Xenopus</taxon>
    </lineage>
</organism>
<sequence>MTLSGSGSASDMSGQTVLSADDADIDVVGEGDEALDKDSECESTAGHTDEVGELGGKEIPRSPSGSGTEAEGKGESQQQQQEGIQNKPKNSLVKPPYSYIALITMSILQSPQKKLTLSGICEFISNRFPYYREKFPAWQNSIRHNLSLNDCFVKIPREPGNPGKGNYWTLDPQSEDMFDNGSFLRRRKRFKRQQQDSLREQTALMMQSFGAYSLASPYGRHYGLHPAAYTHPAALQYPYIPPVGHMLPPAVPLLPSSELTRKAFSSQLSPSLQLQLSSLSSTAASIIKSEPSSRPSFSIENIIGVSAASSAAPHTFLRPPVTVQSALMSHQPLALSRSTAAIGPILSVPTNLISGQFLPTAAAAVAKWPAQ</sequence>